<keyword id="KW-1185">Reference proteome</keyword>
<keyword id="KW-0687">Ribonucleoprotein</keyword>
<keyword id="KW-0689">Ribosomal protein</keyword>
<reference key="1">
    <citation type="journal article" date="2000" name="Nature">
        <title>The genome sequence of the food-borne pathogen Campylobacter jejuni reveals hypervariable sequences.</title>
        <authorList>
            <person name="Parkhill J."/>
            <person name="Wren B.W."/>
            <person name="Mungall K.L."/>
            <person name="Ketley J.M."/>
            <person name="Churcher C.M."/>
            <person name="Basham D."/>
            <person name="Chillingworth T."/>
            <person name="Davies R.M."/>
            <person name="Feltwell T."/>
            <person name="Holroyd S."/>
            <person name="Jagels K."/>
            <person name="Karlyshev A.V."/>
            <person name="Moule S."/>
            <person name="Pallen M.J."/>
            <person name="Penn C.W."/>
            <person name="Quail M.A."/>
            <person name="Rajandream M.A."/>
            <person name="Rutherford K.M."/>
            <person name="van Vliet A.H.M."/>
            <person name="Whitehead S."/>
            <person name="Barrell B.G."/>
        </authorList>
    </citation>
    <scope>NUCLEOTIDE SEQUENCE [LARGE SCALE GENOMIC DNA]</scope>
    <source>
        <strain>ATCC 700819 / NCTC 11168</strain>
    </source>
</reference>
<protein>
    <recommendedName>
        <fullName evidence="1">Small ribosomal subunit protein bS21</fullName>
    </recommendedName>
    <alternativeName>
        <fullName>30S ribosomal protein S21</fullName>
    </alternativeName>
</protein>
<evidence type="ECO:0000305" key="1"/>
<comment type="similarity">
    <text evidence="1">Belongs to the bacterial ribosomal protein bS21 family.</text>
</comment>
<gene>
    <name type="primary">rpsU</name>
    <name type="ordered locus">Cj0370</name>
</gene>
<accession>Q9PID2</accession>
<accession>Q0PBE0</accession>
<sequence length="70" mass="8673">MPGIKVHPNESFDEAYRKFKKQVDRNLVVTEVRARRFFEPMTEIRKKQKISARKKMLKRLYMLRRYESRL</sequence>
<name>RS21_CAMJE</name>
<proteinExistence type="inferred from homology"/>
<feature type="chain" id="PRO_0000178319" description="Small ribosomal subunit protein bS21">
    <location>
        <begin position="1"/>
        <end position="70"/>
    </location>
</feature>
<dbReference type="EMBL" id="AL111168">
    <property type="protein sequence ID" value="CAL34520.1"/>
    <property type="molecule type" value="Genomic_DNA"/>
</dbReference>
<dbReference type="PIR" id="H81379">
    <property type="entry name" value="H81379"/>
</dbReference>
<dbReference type="RefSeq" id="WP_002780697.1">
    <property type="nucleotide sequence ID" value="NZ_SZUC01000004.1"/>
</dbReference>
<dbReference type="RefSeq" id="YP_002343807.1">
    <property type="nucleotide sequence ID" value="NC_002163.1"/>
</dbReference>
<dbReference type="SMR" id="Q9PID2"/>
<dbReference type="IntAct" id="Q9PID2">
    <property type="interactions" value="32"/>
</dbReference>
<dbReference type="STRING" id="192222.Cj0370"/>
<dbReference type="PaxDb" id="192222-Cj0370"/>
<dbReference type="EnsemblBacteria" id="CAL34520">
    <property type="protein sequence ID" value="CAL34520"/>
    <property type="gene ID" value="Cj0370"/>
</dbReference>
<dbReference type="GeneID" id="904693"/>
<dbReference type="GeneID" id="98394943"/>
<dbReference type="KEGG" id="cje:Cj0370"/>
<dbReference type="PATRIC" id="fig|192222.6.peg.361"/>
<dbReference type="eggNOG" id="COG0828">
    <property type="taxonomic scope" value="Bacteria"/>
</dbReference>
<dbReference type="HOGENOM" id="CLU_159258_1_1_7"/>
<dbReference type="OrthoDB" id="9799244at2"/>
<dbReference type="PRO" id="PR:Q9PID2"/>
<dbReference type="Proteomes" id="UP000000799">
    <property type="component" value="Chromosome"/>
</dbReference>
<dbReference type="GO" id="GO:1990904">
    <property type="term" value="C:ribonucleoprotein complex"/>
    <property type="evidence" value="ECO:0007669"/>
    <property type="project" value="UniProtKB-KW"/>
</dbReference>
<dbReference type="GO" id="GO:0005840">
    <property type="term" value="C:ribosome"/>
    <property type="evidence" value="ECO:0007669"/>
    <property type="project" value="UniProtKB-KW"/>
</dbReference>
<dbReference type="GO" id="GO:0003735">
    <property type="term" value="F:structural constituent of ribosome"/>
    <property type="evidence" value="ECO:0007669"/>
    <property type="project" value="InterPro"/>
</dbReference>
<dbReference type="GO" id="GO:0006412">
    <property type="term" value="P:translation"/>
    <property type="evidence" value="ECO:0007669"/>
    <property type="project" value="UniProtKB-UniRule"/>
</dbReference>
<dbReference type="Gene3D" id="1.20.5.1150">
    <property type="entry name" value="Ribosomal protein S8"/>
    <property type="match status" value="1"/>
</dbReference>
<dbReference type="HAMAP" id="MF_00358">
    <property type="entry name" value="Ribosomal_bS21"/>
    <property type="match status" value="1"/>
</dbReference>
<dbReference type="InterPro" id="IPR001911">
    <property type="entry name" value="Ribosomal_bS21"/>
</dbReference>
<dbReference type="InterPro" id="IPR038380">
    <property type="entry name" value="Ribosomal_bS21_sf"/>
</dbReference>
<dbReference type="NCBIfam" id="TIGR00030">
    <property type="entry name" value="S21p"/>
    <property type="match status" value="1"/>
</dbReference>
<dbReference type="Pfam" id="PF01165">
    <property type="entry name" value="Ribosomal_S21"/>
    <property type="match status" value="1"/>
</dbReference>
<dbReference type="PRINTS" id="PR00976">
    <property type="entry name" value="RIBOSOMALS21"/>
</dbReference>
<organism>
    <name type="scientific">Campylobacter jejuni subsp. jejuni serotype O:2 (strain ATCC 700819 / NCTC 11168)</name>
    <dbReference type="NCBI Taxonomy" id="192222"/>
    <lineage>
        <taxon>Bacteria</taxon>
        <taxon>Pseudomonadati</taxon>
        <taxon>Campylobacterota</taxon>
        <taxon>Epsilonproteobacteria</taxon>
        <taxon>Campylobacterales</taxon>
        <taxon>Campylobacteraceae</taxon>
        <taxon>Campylobacter</taxon>
    </lineage>
</organism>